<gene>
    <name evidence="1" type="primary">ribH</name>
    <name type="ordered locus">CLK_2260</name>
</gene>
<evidence type="ECO:0000255" key="1">
    <source>
        <dbReference type="HAMAP-Rule" id="MF_00178"/>
    </source>
</evidence>
<proteinExistence type="inferred from homology"/>
<feature type="chain" id="PRO_1000098179" description="6,7-dimethyl-8-ribityllumazine synthase">
    <location>
        <begin position="1"/>
        <end position="154"/>
    </location>
</feature>
<feature type="active site" description="Proton donor" evidence="1">
    <location>
        <position position="88"/>
    </location>
</feature>
<feature type="binding site" evidence="1">
    <location>
        <position position="22"/>
    </location>
    <ligand>
        <name>5-amino-6-(D-ribitylamino)uracil</name>
        <dbReference type="ChEBI" id="CHEBI:15934"/>
    </ligand>
</feature>
<feature type="binding site" evidence="1">
    <location>
        <begin position="56"/>
        <end position="58"/>
    </location>
    <ligand>
        <name>5-amino-6-(D-ribitylamino)uracil</name>
        <dbReference type="ChEBI" id="CHEBI:15934"/>
    </ligand>
</feature>
<feature type="binding site" evidence="1">
    <location>
        <begin position="80"/>
        <end position="82"/>
    </location>
    <ligand>
        <name>5-amino-6-(D-ribitylamino)uracil</name>
        <dbReference type="ChEBI" id="CHEBI:15934"/>
    </ligand>
</feature>
<feature type="binding site" evidence="1">
    <location>
        <begin position="85"/>
        <end position="86"/>
    </location>
    <ligand>
        <name>(2S)-2-hydroxy-3-oxobutyl phosphate</name>
        <dbReference type="ChEBI" id="CHEBI:58830"/>
    </ligand>
</feature>
<feature type="binding site" evidence="1">
    <location>
        <position position="113"/>
    </location>
    <ligand>
        <name>5-amino-6-(D-ribitylamino)uracil</name>
        <dbReference type="ChEBI" id="CHEBI:15934"/>
    </ligand>
</feature>
<feature type="binding site" evidence="1">
    <location>
        <position position="127"/>
    </location>
    <ligand>
        <name>(2S)-2-hydroxy-3-oxobutyl phosphate</name>
        <dbReference type="ChEBI" id="CHEBI:58830"/>
    </ligand>
</feature>
<keyword id="KW-0686">Riboflavin biosynthesis</keyword>
<keyword id="KW-0808">Transferase</keyword>
<organism>
    <name type="scientific">Clostridium botulinum (strain Loch Maree / Type A3)</name>
    <dbReference type="NCBI Taxonomy" id="498214"/>
    <lineage>
        <taxon>Bacteria</taxon>
        <taxon>Bacillati</taxon>
        <taxon>Bacillota</taxon>
        <taxon>Clostridia</taxon>
        <taxon>Eubacteriales</taxon>
        <taxon>Clostridiaceae</taxon>
        <taxon>Clostridium</taxon>
    </lineage>
</organism>
<name>RISB_CLOBM</name>
<sequence>MKIYEGRLTAEGLKVGIIVSRFNEFITSKLLAGSIDCLKRHGAKEDNIEVCWVPGAFEIPVIAKKMASKGKYDAVICLGAVIRGATPHFDYVSSEVSKGVAHVSLDKEVPVIFGVLTTDTIEQAIERAGTKAGNKGYDAAMSAIEMSNLMKVLD</sequence>
<protein>
    <recommendedName>
        <fullName evidence="1">6,7-dimethyl-8-ribityllumazine synthase</fullName>
        <shortName evidence="1">DMRL synthase</shortName>
        <shortName evidence="1">LS</shortName>
        <shortName evidence="1">Lumazine synthase</shortName>
        <ecNumber evidence="1">2.5.1.78</ecNumber>
    </recommendedName>
</protein>
<reference key="1">
    <citation type="journal article" date="2007" name="PLoS ONE">
        <title>Analysis of the neurotoxin complex genes in Clostridium botulinum A1-A4 and B1 strains: BoNT/A3, /Ba4 and /B1 clusters are located within plasmids.</title>
        <authorList>
            <person name="Smith T.J."/>
            <person name="Hill K.K."/>
            <person name="Foley B.T."/>
            <person name="Detter J.C."/>
            <person name="Munk A.C."/>
            <person name="Bruce D.C."/>
            <person name="Doggett N.A."/>
            <person name="Smith L.A."/>
            <person name="Marks J.D."/>
            <person name="Xie G."/>
            <person name="Brettin T.S."/>
        </authorList>
    </citation>
    <scope>NUCLEOTIDE SEQUENCE [LARGE SCALE GENOMIC DNA]</scope>
    <source>
        <strain>Loch Maree / Type A3</strain>
    </source>
</reference>
<accession>B1KZ46</accession>
<dbReference type="EC" id="2.5.1.78" evidence="1"/>
<dbReference type="EMBL" id="CP000962">
    <property type="protein sequence ID" value="ACA54152.1"/>
    <property type="molecule type" value="Genomic_DNA"/>
</dbReference>
<dbReference type="SMR" id="B1KZ46"/>
<dbReference type="KEGG" id="cbl:CLK_2260"/>
<dbReference type="HOGENOM" id="CLU_089358_1_1_9"/>
<dbReference type="UniPathway" id="UPA00275">
    <property type="reaction ID" value="UER00404"/>
</dbReference>
<dbReference type="GO" id="GO:0005829">
    <property type="term" value="C:cytosol"/>
    <property type="evidence" value="ECO:0007669"/>
    <property type="project" value="TreeGrafter"/>
</dbReference>
<dbReference type="GO" id="GO:0009349">
    <property type="term" value="C:riboflavin synthase complex"/>
    <property type="evidence" value="ECO:0007669"/>
    <property type="project" value="InterPro"/>
</dbReference>
<dbReference type="GO" id="GO:0000906">
    <property type="term" value="F:6,7-dimethyl-8-ribityllumazine synthase activity"/>
    <property type="evidence" value="ECO:0007669"/>
    <property type="project" value="UniProtKB-UniRule"/>
</dbReference>
<dbReference type="GO" id="GO:0009231">
    <property type="term" value="P:riboflavin biosynthetic process"/>
    <property type="evidence" value="ECO:0007669"/>
    <property type="project" value="UniProtKB-UniRule"/>
</dbReference>
<dbReference type="CDD" id="cd09209">
    <property type="entry name" value="Lumazine_synthase-I"/>
    <property type="match status" value="1"/>
</dbReference>
<dbReference type="FunFam" id="3.40.50.960:FF:000001">
    <property type="entry name" value="6,7-dimethyl-8-ribityllumazine synthase"/>
    <property type="match status" value="1"/>
</dbReference>
<dbReference type="Gene3D" id="3.40.50.960">
    <property type="entry name" value="Lumazine/riboflavin synthase"/>
    <property type="match status" value="1"/>
</dbReference>
<dbReference type="HAMAP" id="MF_00178">
    <property type="entry name" value="Lumazine_synth"/>
    <property type="match status" value="1"/>
</dbReference>
<dbReference type="InterPro" id="IPR034964">
    <property type="entry name" value="LS"/>
</dbReference>
<dbReference type="InterPro" id="IPR002180">
    <property type="entry name" value="LS/RS"/>
</dbReference>
<dbReference type="InterPro" id="IPR036467">
    <property type="entry name" value="LS/RS_sf"/>
</dbReference>
<dbReference type="NCBIfam" id="TIGR00114">
    <property type="entry name" value="lumazine-synth"/>
    <property type="match status" value="1"/>
</dbReference>
<dbReference type="NCBIfam" id="NF000812">
    <property type="entry name" value="PRK00061.1-4"/>
    <property type="match status" value="1"/>
</dbReference>
<dbReference type="PANTHER" id="PTHR21058:SF0">
    <property type="entry name" value="6,7-DIMETHYL-8-RIBITYLLUMAZINE SYNTHASE"/>
    <property type="match status" value="1"/>
</dbReference>
<dbReference type="PANTHER" id="PTHR21058">
    <property type="entry name" value="6,7-DIMETHYL-8-RIBITYLLUMAZINE SYNTHASE DMRL SYNTHASE LUMAZINE SYNTHASE"/>
    <property type="match status" value="1"/>
</dbReference>
<dbReference type="Pfam" id="PF00885">
    <property type="entry name" value="DMRL_synthase"/>
    <property type="match status" value="1"/>
</dbReference>
<dbReference type="SUPFAM" id="SSF52121">
    <property type="entry name" value="Lumazine synthase"/>
    <property type="match status" value="1"/>
</dbReference>
<comment type="function">
    <text evidence="1">Catalyzes the formation of 6,7-dimethyl-8-ribityllumazine by condensation of 5-amino-6-(D-ribitylamino)uracil with 3,4-dihydroxy-2-butanone 4-phosphate. This is the penultimate step in the biosynthesis of riboflavin.</text>
</comment>
<comment type="catalytic activity">
    <reaction evidence="1">
        <text>(2S)-2-hydroxy-3-oxobutyl phosphate + 5-amino-6-(D-ribitylamino)uracil = 6,7-dimethyl-8-(1-D-ribityl)lumazine + phosphate + 2 H2O + H(+)</text>
        <dbReference type="Rhea" id="RHEA:26152"/>
        <dbReference type="ChEBI" id="CHEBI:15377"/>
        <dbReference type="ChEBI" id="CHEBI:15378"/>
        <dbReference type="ChEBI" id="CHEBI:15934"/>
        <dbReference type="ChEBI" id="CHEBI:43474"/>
        <dbReference type="ChEBI" id="CHEBI:58201"/>
        <dbReference type="ChEBI" id="CHEBI:58830"/>
        <dbReference type="EC" id="2.5.1.78"/>
    </reaction>
</comment>
<comment type="pathway">
    <text evidence="1">Cofactor biosynthesis; riboflavin biosynthesis; riboflavin from 2-hydroxy-3-oxobutyl phosphate and 5-amino-6-(D-ribitylamino)uracil: step 1/2.</text>
</comment>
<comment type="similarity">
    <text evidence="1">Belongs to the DMRL synthase family.</text>
</comment>